<name>BIOB_EHRCR</name>
<keyword id="KW-0001">2Fe-2S</keyword>
<keyword id="KW-0004">4Fe-4S</keyword>
<keyword id="KW-0093">Biotin biosynthesis</keyword>
<keyword id="KW-0408">Iron</keyword>
<keyword id="KW-0411">Iron-sulfur</keyword>
<keyword id="KW-0479">Metal-binding</keyword>
<keyword id="KW-1185">Reference proteome</keyword>
<keyword id="KW-0949">S-adenosyl-L-methionine</keyword>
<keyword id="KW-0808">Transferase</keyword>
<comment type="function">
    <text evidence="1">Catalyzes the conversion of dethiobiotin (DTB) to biotin by the insertion of a sulfur atom into dethiobiotin via a radical-based mechanism.</text>
</comment>
<comment type="catalytic activity">
    <reaction evidence="1">
        <text>(4R,5S)-dethiobiotin + (sulfur carrier)-SH + 2 reduced [2Fe-2S]-[ferredoxin] + 2 S-adenosyl-L-methionine = (sulfur carrier)-H + biotin + 2 5'-deoxyadenosine + 2 L-methionine + 2 oxidized [2Fe-2S]-[ferredoxin]</text>
        <dbReference type="Rhea" id="RHEA:22060"/>
        <dbReference type="Rhea" id="RHEA-COMP:10000"/>
        <dbReference type="Rhea" id="RHEA-COMP:10001"/>
        <dbReference type="Rhea" id="RHEA-COMP:14737"/>
        <dbReference type="Rhea" id="RHEA-COMP:14739"/>
        <dbReference type="ChEBI" id="CHEBI:17319"/>
        <dbReference type="ChEBI" id="CHEBI:29917"/>
        <dbReference type="ChEBI" id="CHEBI:33737"/>
        <dbReference type="ChEBI" id="CHEBI:33738"/>
        <dbReference type="ChEBI" id="CHEBI:57586"/>
        <dbReference type="ChEBI" id="CHEBI:57844"/>
        <dbReference type="ChEBI" id="CHEBI:59789"/>
        <dbReference type="ChEBI" id="CHEBI:64428"/>
        <dbReference type="ChEBI" id="CHEBI:149473"/>
        <dbReference type="EC" id="2.8.1.6"/>
    </reaction>
</comment>
<comment type="cofactor">
    <cofactor evidence="1">
        <name>[4Fe-4S] cluster</name>
        <dbReference type="ChEBI" id="CHEBI:49883"/>
    </cofactor>
    <text evidence="1">Binds 1 [4Fe-4S] cluster. The cluster is coordinated with 3 cysteines and an exchangeable S-adenosyl-L-methionine.</text>
</comment>
<comment type="cofactor">
    <cofactor evidence="1">
        <name>[2Fe-2S] cluster</name>
        <dbReference type="ChEBI" id="CHEBI:190135"/>
    </cofactor>
    <text evidence="1">Binds 1 [2Fe-2S] cluster. The cluster is coordinated with 3 cysteines and 1 arginine.</text>
</comment>
<comment type="pathway">
    <text evidence="1">Cofactor biosynthesis; biotin biosynthesis; biotin from 7,8-diaminononanoate: step 2/2.</text>
</comment>
<comment type="subunit">
    <text evidence="1">Homodimer.</text>
</comment>
<comment type="similarity">
    <text evidence="1">Belongs to the radical SAM superfamily. Biotin synthase family.</text>
</comment>
<accession>Q2GHB1</accession>
<gene>
    <name evidence="1" type="primary">bioB</name>
    <name type="ordered locus">ECH_0352</name>
</gene>
<proteinExistence type="inferred from homology"/>
<sequence>MNTCTTIRNNWQLDEILELFNTPFNDLILRSHLTHRQFFNNNEIQLAALLNIKTGGCPENCRYCSQSAHYKTDLQKEALLDVENIKKAIQTAKNSGADRFCFAAAWRQLRDKDIEYICNIINLIKSEKLESCASLGMITLDQAKKLKNAGLDFYNHNIDTSRDFYSNVTTTRNYDDRLASLNNIYEAGINICSGGILGLGESIEDRAKMLLTLANLKEHPRSVPINRLVPIKGTPFENNIKVDNIDFIKTIAVTRILMPKSYVRLAAGRKDMSEEMQALCLFAGANSIFYGEKLLTTPNSNCDDDKNLLSKLGIKTKEPVLLNSQN</sequence>
<feature type="chain" id="PRO_0000381375" description="Biotin synthase">
    <location>
        <begin position="1"/>
        <end position="326"/>
    </location>
</feature>
<feature type="domain" description="Radical SAM core" evidence="2">
    <location>
        <begin position="42"/>
        <end position="266"/>
    </location>
</feature>
<feature type="binding site" evidence="1">
    <location>
        <position position="57"/>
    </location>
    <ligand>
        <name>[4Fe-4S] cluster</name>
        <dbReference type="ChEBI" id="CHEBI:49883"/>
        <note>4Fe-4S-S-AdoMet</note>
    </ligand>
</feature>
<feature type="binding site" evidence="1">
    <location>
        <position position="61"/>
    </location>
    <ligand>
        <name>[4Fe-4S] cluster</name>
        <dbReference type="ChEBI" id="CHEBI:49883"/>
        <note>4Fe-4S-S-AdoMet</note>
    </ligand>
</feature>
<feature type="binding site" evidence="1">
    <location>
        <position position="64"/>
    </location>
    <ligand>
        <name>[4Fe-4S] cluster</name>
        <dbReference type="ChEBI" id="CHEBI:49883"/>
        <note>4Fe-4S-S-AdoMet</note>
    </ligand>
</feature>
<feature type="binding site" evidence="1">
    <location>
        <position position="101"/>
    </location>
    <ligand>
        <name>[2Fe-2S] cluster</name>
        <dbReference type="ChEBI" id="CHEBI:190135"/>
    </ligand>
</feature>
<feature type="binding site" evidence="1">
    <location>
        <position position="132"/>
    </location>
    <ligand>
        <name>[2Fe-2S] cluster</name>
        <dbReference type="ChEBI" id="CHEBI:190135"/>
    </ligand>
</feature>
<feature type="binding site" evidence="1">
    <location>
        <position position="192"/>
    </location>
    <ligand>
        <name>[2Fe-2S] cluster</name>
        <dbReference type="ChEBI" id="CHEBI:190135"/>
    </ligand>
</feature>
<feature type="binding site" evidence="1">
    <location>
        <position position="264"/>
    </location>
    <ligand>
        <name>[2Fe-2S] cluster</name>
        <dbReference type="ChEBI" id="CHEBI:190135"/>
    </ligand>
</feature>
<reference key="1">
    <citation type="journal article" date="2006" name="PLoS Genet.">
        <title>Comparative genomics of emerging human ehrlichiosis agents.</title>
        <authorList>
            <person name="Dunning Hotopp J.C."/>
            <person name="Lin M."/>
            <person name="Madupu R."/>
            <person name="Crabtree J."/>
            <person name="Angiuoli S.V."/>
            <person name="Eisen J.A."/>
            <person name="Seshadri R."/>
            <person name="Ren Q."/>
            <person name="Wu M."/>
            <person name="Utterback T.R."/>
            <person name="Smith S."/>
            <person name="Lewis M."/>
            <person name="Khouri H."/>
            <person name="Zhang C."/>
            <person name="Niu H."/>
            <person name="Lin Q."/>
            <person name="Ohashi N."/>
            <person name="Zhi N."/>
            <person name="Nelson W.C."/>
            <person name="Brinkac L.M."/>
            <person name="Dodson R.J."/>
            <person name="Rosovitz M.J."/>
            <person name="Sundaram J.P."/>
            <person name="Daugherty S.C."/>
            <person name="Davidsen T."/>
            <person name="Durkin A.S."/>
            <person name="Gwinn M.L."/>
            <person name="Haft D.H."/>
            <person name="Selengut J.D."/>
            <person name="Sullivan S.A."/>
            <person name="Zafar N."/>
            <person name="Zhou L."/>
            <person name="Benahmed F."/>
            <person name="Forberger H."/>
            <person name="Halpin R."/>
            <person name="Mulligan S."/>
            <person name="Robinson J."/>
            <person name="White O."/>
            <person name="Rikihisa Y."/>
            <person name="Tettelin H."/>
        </authorList>
    </citation>
    <scope>NUCLEOTIDE SEQUENCE [LARGE SCALE GENOMIC DNA]</scope>
    <source>
        <strain>ATCC CRL-10679 / Arkansas</strain>
    </source>
</reference>
<organism>
    <name type="scientific">Ehrlichia chaffeensis (strain ATCC CRL-10679 / Arkansas)</name>
    <dbReference type="NCBI Taxonomy" id="205920"/>
    <lineage>
        <taxon>Bacteria</taxon>
        <taxon>Pseudomonadati</taxon>
        <taxon>Pseudomonadota</taxon>
        <taxon>Alphaproteobacteria</taxon>
        <taxon>Rickettsiales</taxon>
        <taxon>Anaplasmataceae</taxon>
        <taxon>Ehrlichia</taxon>
    </lineage>
</organism>
<dbReference type="EC" id="2.8.1.6" evidence="1"/>
<dbReference type="EMBL" id="CP000236">
    <property type="protein sequence ID" value="ABD45247.1"/>
    <property type="molecule type" value="Genomic_DNA"/>
</dbReference>
<dbReference type="RefSeq" id="WP_006009950.1">
    <property type="nucleotide sequence ID" value="NC_007799.1"/>
</dbReference>
<dbReference type="SMR" id="Q2GHB1"/>
<dbReference type="STRING" id="205920.ECH_0352"/>
<dbReference type="KEGG" id="ech:ECH_0352"/>
<dbReference type="eggNOG" id="COG0502">
    <property type="taxonomic scope" value="Bacteria"/>
</dbReference>
<dbReference type="HOGENOM" id="CLU_033172_1_2_5"/>
<dbReference type="OrthoDB" id="9786826at2"/>
<dbReference type="UniPathway" id="UPA00078">
    <property type="reaction ID" value="UER00162"/>
</dbReference>
<dbReference type="Proteomes" id="UP000008320">
    <property type="component" value="Chromosome"/>
</dbReference>
<dbReference type="GO" id="GO:0051537">
    <property type="term" value="F:2 iron, 2 sulfur cluster binding"/>
    <property type="evidence" value="ECO:0007669"/>
    <property type="project" value="UniProtKB-KW"/>
</dbReference>
<dbReference type="GO" id="GO:0051539">
    <property type="term" value="F:4 iron, 4 sulfur cluster binding"/>
    <property type="evidence" value="ECO:0007669"/>
    <property type="project" value="UniProtKB-KW"/>
</dbReference>
<dbReference type="GO" id="GO:0004076">
    <property type="term" value="F:biotin synthase activity"/>
    <property type="evidence" value="ECO:0007669"/>
    <property type="project" value="UniProtKB-UniRule"/>
</dbReference>
<dbReference type="GO" id="GO:0005506">
    <property type="term" value="F:iron ion binding"/>
    <property type="evidence" value="ECO:0007669"/>
    <property type="project" value="UniProtKB-UniRule"/>
</dbReference>
<dbReference type="GO" id="GO:0009102">
    <property type="term" value="P:biotin biosynthetic process"/>
    <property type="evidence" value="ECO:0007669"/>
    <property type="project" value="UniProtKB-UniRule"/>
</dbReference>
<dbReference type="CDD" id="cd01335">
    <property type="entry name" value="Radical_SAM"/>
    <property type="match status" value="1"/>
</dbReference>
<dbReference type="Gene3D" id="3.20.20.70">
    <property type="entry name" value="Aldolase class I"/>
    <property type="match status" value="1"/>
</dbReference>
<dbReference type="HAMAP" id="MF_01694">
    <property type="entry name" value="BioB"/>
    <property type="match status" value="1"/>
</dbReference>
<dbReference type="InterPro" id="IPR013785">
    <property type="entry name" value="Aldolase_TIM"/>
</dbReference>
<dbReference type="InterPro" id="IPR010722">
    <property type="entry name" value="BATS_dom"/>
</dbReference>
<dbReference type="InterPro" id="IPR002684">
    <property type="entry name" value="Biotin_synth/BioAB"/>
</dbReference>
<dbReference type="InterPro" id="IPR024177">
    <property type="entry name" value="Biotin_synthase"/>
</dbReference>
<dbReference type="InterPro" id="IPR006638">
    <property type="entry name" value="Elp3/MiaA/NifB-like_rSAM"/>
</dbReference>
<dbReference type="InterPro" id="IPR007197">
    <property type="entry name" value="rSAM"/>
</dbReference>
<dbReference type="NCBIfam" id="TIGR00433">
    <property type="entry name" value="bioB"/>
    <property type="match status" value="1"/>
</dbReference>
<dbReference type="PANTHER" id="PTHR22976">
    <property type="entry name" value="BIOTIN SYNTHASE"/>
    <property type="match status" value="1"/>
</dbReference>
<dbReference type="PANTHER" id="PTHR22976:SF2">
    <property type="entry name" value="BIOTIN SYNTHASE, MITOCHONDRIAL"/>
    <property type="match status" value="1"/>
</dbReference>
<dbReference type="Pfam" id="PF06968">
    <property type="entry name" value="BATS"/>
    <property type="match status" value="1"/>
</dbReference>
<dbReference type="Pfam" id="PF04055">
    <property type="entry name" value="Radical_SAM"/>
    <property type="match status" value="1"/>
</dbReference>
<dbReference type="PIRSF" id="PIRSF001619">
    <property type="entry name" value="Biotin_synth"/>
    <property type="match status" value="1"/>
</dbReference>
<dbReference type="SFLD" id="SFLDF00272">
    <property type="entry name" value="biotin_synthase"/>
    <property type="match status" value="1"/>
</dbReference>
<dbReference type="SFLD" id="SFLDG01278">
    <property type="entry name" value="biotin_synthase_like"/>
    <property type="match status" value="1"/>
</dbReference>
<dbReference type="SMART" id="SM00876">
    <property type="entry name" value="BATS"/>
    <property type="match status" value="1"/>
</dbReference>
<dbReference type="SMART" id="SM00729">
    <property type="entry name" value="Elp3"/>
    <property type="match status" value="1"/>
</dbReference>
<dbReference type="SUPFAM" id="SSF102114">
    <property type="entry name" value="Radical SAM enzymes"/>
    <property type="match status" value="1"/>
</dbReference>
<dbReference type="PROSITE" id="PS51918">
    <property type="entry name" value="RADICAL_SAM"/>
    <property type="match status" value="1"/>
</dbReference>
<protein>
    <recommendedName>
        <fullName evidence="1">Biotin synthase</fullName>
        <ecNumber evidence="1">2.8.1.6</ecNumber>
    </recommendedName>
</protein>
<evidence type="ECO:0000255" key="1">
    <source>
        <dbReference type="HAMAP-Rule" id="MF_01694"/>
    </source>
</evidence>
<evidence type="ECO:0000255" key="2">
    <source>
        <dbReference type="PROSITE-ProRule" id="PRU01266"/>
    </source>
</evidence>